<dbReference type="EMBL" id="FO080222">
    <property type="protein sequence ID" value="CCD62133.1"/>
    <property type="molecule type" value="Genomic_DNA"/>
</dbReference>
<dbReference type="PIR" id="S44632">
    <property type="entry name" value="S44632"/>
</dbReference>
<dbReference type="RefSeq" id="NP_498906.1">
    <property type="nucleotide sequence ID" value="NM_066505.2"/>
</dbReference>
<dbReference type="FunCoup" id="P34406">
    <property type="interactions" value="811"/>
</dbReference>
<dbReference type="STRING" id="6239.F22B7.3.1"/>
<dbReference type="PaxDb" id="6239-F22B7.3"/>
<dbReference type="EnsemblMetazoa" id="F22B7.3.1">
    <property type="protein sequence ID" value="F22B7.3.1"/>
    <property type="gene ID" value="WBGene00017694"/>
</dbReference>
<dbReference type="GeneID" id="184813"/>
<dbReference type="KEGG" id="cel:CELE_F22B7.3"/>
<dbReference type="UCSC" id="F22B7.3">
    <property type="organism name" value="c. elegans"/>
</dbReference>
<dbReference type="AGR" id="WB:WBGene00017694"/>
<dbReference type="CTD" id="184813"/>
<dbReference type="WormBase" id="F22B7.3">
    <property type="protein sequence ID" value="CE00156"/>
    <property type="gene ID" value="WBGene00017694"/>
</dbReference>
<dbReference type="eggNOG" id="ENOG502TI8R">
    <property type="taxonomic scope" value="Eukaryota"/>
</dbReference>
<dbReference type="HOGENOM" id="CLU_2322496_0_0_1"/>
<dbReference type="InParanoid" id="P34406"/>
<dbReference type="OMA" id="NAQHYEN"/>
<dbReference type="OrthoDB" id="5788254at2759"/>
<dbReference type="PRO" id="PR:P34406"/>
<dbReference type="Proteomes" id="UP000001940">
    <property type="component" value="Chromosome III"/>
</dbReference>
<dbReference type="Bgee" id="WBGene00017694">
    <property type="expression patterns" value="Expressed in material anatomical entity and 1 other cell type or tissue"/>
</dbReference>
<dbReference type="InterPro" id="IPR035334">
    <property type="entry name" value="DUF5390"/>
</dbReference>
<dbReference type="Pfam" id="PF17365">
    <property type="entry name" value="DUF5390"/>
    <property type="match status" value="1"/>
</dbReference>
<gene>
    <name type="ORF">F22B7.3</name>
</gene>
<keyword id="KW-1185">Reference proteome</keyword>
<feature type="chain" id="PRO_0000065308" description="Uncharacterized protein F22B7.3">
    <location>
        <begin position="1"/>
        <end position="99"/>
    </location>
</feature>
<accession>P34406</accession>
<name>YLW3_CAEEL</name>
<organism>
    <name type="scientific">Caenorhabditis elegans</name>
    <dbReference type="NCBI Taxonomy" id="6239"/>
    <lineage>
        <taxon>Eukaryota</taxon>
        <taxon>Metazoa</taxon>
        <taxon>Ecdysozoa</taxon>
        <taxon>Nematoda</taxon>
        <taxon>Chromadorea</taxon>
        <taxon>Rhabditida</taxon>
        <taxon>Rhabditina</taxon>
        <taxon>Rhabditomorpha</taxon>
        <taxon>Rhabditoidea</taxon>
        <taxon>Rhabditidae</taxon>
        <taxon>Peloderinae</taxon>
        <taxon>Caenorhabditis</taxon>
    </lineage>
</organism>
<protein>
    <recommendedName>
        <fullName>Uncharacterized protein F22B7.3</fullName>
    </recommendedName>
</protein>
<proteinExistence type="predicted"/>
<sequence>MAHNNYLDLEMLFNECNAQHYENLGMFFKWLQQFAAHHEDPKITIKDFKGDKTSGEMILHVNTFTLFKYRQEFDMKVSALNDNGLGWKILFVDRSLGCN</sequence>
<reference key="1">
    <citation type="journal article" date="1994" name="Nature">
        <title>2.2 Mb of contiguous nucleotide sequence from chromosome III of C. elegans.</title>
        <authorList>
            <person name="Wilson R."/>
            <person name="Ainscough R."/>
            <person name="Anderson K."/>
            <person name="Baynes C."/>
            <person name="Berks M."/>
            <person name="Bonfield J."/>
            <person name="Burton J."/>
            <person name="Connell M."/>
            <person name="Copsey T."/>
            <person name="Cooper J."/>
            <person name="Coulson A."/>
            <person name="Craxton M."/>
            <person name="Dear S."/>
            <person name="Du Z."/>
            <person name="Durbin R."/>
            <person name="Favello A."/>
            <person name="Fraser A."/>
            <person name="Fulton L."/>
            <person name="Gardner A."/>
            <person name="Green P."/>
            <person name="Hawkins T."/>
            <person name="Hillier L."/>
            <person name="Jier M."/>
            <person name="Johnston L."/>
            <person name="Jones M."/>
            <person name="Kershaw J."/>
            <person name="Kirsten J."/>
            <person name="Laisster N."/>
            <person name="Latreille P."/>
            <person name="Lightning J."/>
            <person name="Lloyd C."/>
            <person name="Mortimore B."/>
            <person name="O'Callaghan M."/>
            <person name="Parsons J."/>
            <person name="Percy C."/>
            <person name="Rifken L."/>
            <person name="Roopra A."/>
            <person name="Saunders D."/>
            <person name="Shownkeen R."/>
            <person name="Sims M."/>
            <person name="Smaldon N."/>
            <person name="Smith A."/>
            <person name="Smith M."/>
            <person name="Sonnhammer E."/>
            <person name="Staden R."/>
            <person name="Sulston J."/>
            <person name="Thierry-Mieg J."/>
            <person name="Thomas K."/>
            <person name="Vaudin M."/>
            <person name="Vaughan K."/>
            <person name="Waterston R."/>
            <person name="Watson A."/>
            <person name="Weinstock L."/>
            <person name="Wilkinson-Sproat J."/>
            <person name="Wohldman P."/>
        </authorList>
    </citation>
    <scope>NUCLEOTIDE SEQUENCE [LARGE SCALE GENOMIC DNA]</scope>
    <source>
        <strain>Bristol N2</strain>
    </source>
</reference>
<reference key="2">
    <citation type="journal article" date="1998" name="Science">
        <title>Genome sequence of the nematode C. elegans: a platform for investigating biology.</title>
        <authorList>
            <consortium name="The C. elegans sequencing consortium"/>
        </authorList>
    </citation>
    <scope>NUCLEOTIDE SEQUENCE [LARGE SCALE GENOMIC DNA]</scope>
    <source>
        <strain>Bristol N2</strain>
    </source>
</reference>